<accession>P26157</accession>
<organism>
    <name type="scientific">Rhodobacter capsulatus</name>
    <name type="common">Rhodopseudomonas capsulata</name>
    <dbReference type="NCBI Taxonomy" id="1061"/>
    <lineage>
        <taxon>Bacteria</taxon>
        <taxon>Pseudomonadati</taxon>
        <taxon>Pseudomonadota</taxon>
        <taxon>Alphaproteobacteria</taxon>
        <taxon>Rhodobacterales</taxon>
        <taxon>Rhodobacter group</taxon>
        <taxon>Rhodobacter</taxon>
    </lineage>
</organism>
<reference key="1">
    <citation type="submission" date="1991-11" db="EMBL/GenBank/DDBJ databases">
        <authorList>
            <person name="Burke D.H."/>
            <person name="Alberti M."/>
            <person name="Armstrong G.A."/>
            <person name="Hearst J.E."/>
        </authorList>
    </citation>
    <scope>NUCLEOTIDE SEQUENCE [GENOMIC DNA]</scope>
</reference>
<proteinExistence type="predicted"/>
<sequence>MRVLPLPLLIALGFPAAALAGNQTADCMAQATTPAEQLACVGKSSEACRSHLVDAQPALVAGCITDEVGWWRHRLMDAEAAMQARAEKLDVPYTKQIAEGAPRLTDDFEAMRKAWASWAEKRCTFEAMAHRNSPRRMVYAIDCHLHLTAEQALYLEAAAKGK</sequence>
<name>YPU1_RHOCA</name>
<dbReference type="EMBL" id="Z11165">
    <property type="protein sequence ID" value="CAA77515.1"/>
    <property type="molecule type" value="Genomic_DNA"/>
</dbReference>
<dbReference type="PIR" id="S17803">
    <property type="entry name" value="S17803"/>
</dbReference>
<dbReference type="RefSeq" id="WP_013066399.1">
    <property type="nucleotide sequence ID" value="NZ_VIBE01000010.1"/>
</dbReference>
<dbReference type="SMR" id="P26157"/>
<dbReference type="GeneID" id="31489601"/>
<dbReference type="OMA" id="EANWWRD"/>
<dbReference type="Gene3D" id="1.20.1270.180">
    <property type="match status" value="1"/>
</dbReference>
<dbReference type="InterPro" id="IPR009739">
    <property type="entry name" value="LprI-like_N"/>
</dbReference>
<dbReference type="Pfam" id="PF07007">
    <property type="entry name" value="LprI"/>
    <property type="match status" value="1"/>
</dbReference>
<protein>
    <recommendedName>
        <fullName>Uncharacterized 17.7 kDa protein in puhA 5'region</fullName>
    </recommendedName>
    <alternativeName>
        <fullName>ORF162A</fullName>
    </alternativeName>
</protein>
<feature type="chain" id="PRO_0000066419" description="Uncharacterized 17.7 kDa protein in puhA 5'region">
    <location>
        <begin position="1"/>
        <end position="162"/>
    </location>
</feature>